<organism>
    <name type="scientific">Staphylococcus aureus (strain JH9)</name>
    <dbReference type="NCBI Taxonomy" id="359786"/>
    <lineage>
        <taxon>Bacteria</taxon>
        <taxon>Bacillati</taxon>
        <taxon>Bacillota</taxon>
        <taxon>Bacilli</taxon>
        <taxon>Bacillales</taxon>
        <taxon>Staphylococcaceae</taxon>
        <taxon>Staphylococcus</taxon>
    </lineage>
</organism>
<dbReference type="EMBL" id="CP000703">
    <property type="protein sequence ID" value="ABQ47832.1"/>
    <property type="molecule type" value="Genomic_DNA"/>
</dbReference>
<dbReference type="SMR" id="A5INQ9"/>
<dbReference type="KEGG" id="saj:SaurJH9_0018"/>
<dbReference type="HOGENOM" id="CLU_000445_30_4_9"/>
<dbReference type="GO" id="GO:0005829">
    <property type="term" value="C:cytosol"/>
    <property type="evidence" value="ECO:0007669"/>
    <property type="project" value="TreeGrafter"/>
</dbReference>
<dbReference type="GO" id="GO:0032993">
    <property type="term" value="C:protein-DNA complex"/>
    <property type="evidence" value="ECO:0007669"/>
    <property type="project" value="TreeGrafter"/>
</dbReference>
<dbReference type="GO" id="GO:0000156">
    <property type="term" value="F:phosphorelay response regulator activity"/>
    <property type="evidence" value="ECO:0007669"/>
    <property type="project" value="TreeGrafter"/>
</dbReference>
<dbReference type="GO" id="GO:0000976">
    <property type="term" value="F:transcription cis-regulatory region binding"/>
    <property type="evidence" value="ECO:0007669"/>
    <property type="project" value="TreeGrafter"/>
</dbReference>
<dbReference type="GO" id="GO:0006355">
    <property type="term" value="P:regulation of DNA-templated transcription"/>
    <property type="evidence" value="ECO:0007669"/>
    <property type="project" value="InterPro"/>
</dbReference>
<dbReference type="CDD" id="cd17614">
    <property type="entry name" value="REC_OmpR_YycF-like"/>
    <property type="match status" value="1"/>
</dbReference>
<dbReference type="CDD" id="cd00383">
    <property type="entry name" value="trans_reg_C"/>
    <property type="match status" value="1"/>
</dbReference>
<dbReference type="FunFam" id="1.10.10.10:FF:000089">
    <property type="entry name" value="Alkaline phosphatase synthesis response regulator"/>
    <property type="match status" value="1"/>
</dbReference>
<dbReference type="FunFam" id="3.40.50.2300:FF:000052">
    <property type="entry name" value="DNA-binding response regulator YycF"/>
    <property type="match status" value="1"/>
</dbReference>
<dbReference type="Gene3D" id="3.40.50.2300">
    <property type="match status" value="1"/>
</dbReference>
<dbReference type="Gene3D" id="6.10.250.690">
    <property type="match status" value="1"/>
</dbReference>
<dbReference type="Gene3D" id="1.10.10.10">
    <property type="entry name" value="Winged helix-like DNA-binding domain superfamily/Winged helix DNA-binding domain"/>
    <property type="match status" value="1"/>
</dbReference>
<dbReference type="InterPro" id="IPR011006">
    <property type="entry name" value="CheY-like_superfamily"/>
</dbReference>
<dbReference type="InterPro" id="IPR001867">
    <property type="entry name" value="OmpR/PhoB-type_DNA-bd"/>
</dbReference>
<dbReference type="InterPro" id="IPR047791">
    <property type="entry name" value="Resp_reg_WalR"/>
</dbReference>
<dbReference type="InterPro" id="IPR016032">
    <property type="entry name" value="Sig_transdc_resp-reg_C-effctor"/>
</dbReference>
<dbReference type="InterPro" id="IPR001789">
    <property type="entry name" value="Sig_transdc_resp-reg_receiver"/>
</dbReference>
<dbReference type="InterPro" id="IPR039420">
    <property type="entry name" value="WalR-like"/>
</dbReference>
<dbReference type="InterPro" id="IPR036388">
    <property type="entry name" value="WH-like_DNA-bd_sf"/>
</dbReference>
<dbReference type="NCBIfam" id="NF040534">
    <property type="entry name" value="resp_reg_YycF"/>
    <property type="match status" value="1"/>
</dbReference>
<dbReference type="PANTHER" id="PTHR48111:SF40">
    <property type="entry name" value="PHOSPHATE REGULON TRANSCRIPTIONAL REGULATORY PROTEIN PHOB"/>
    <property type="match status" value="1"/>
</dbReference>
<dbReference type="PANTHER" id="PTHR48111">
    <property type="entry name" value="REGULATOR OF RPOS"/>
    <property type="match status" value="1"/>
</dbReference>
<dbReference type="Pfam" id="PF00072">
    <property type="entry name" value="Response_reg"/>
    <property type="match status" value="1"/>
</dbReference>
<dbReference type="Pfam" id="PF00486">
    <property type="entry name" value="Trans_reg_C"/>
    <property type="match status" value="1"/>
</dbReference>
<dbReference type="SMART" id="SM00448">
    <property type="entry name" value="REC"/>
    <property type="match status" value="1"/>
</dbReference>
<dbReference type="SMART" id="SM00862">
    <property type="entry name" value="Trans_reg_C"/>
    <property type="match status" value="1"/>
</dbReference>
<dbReference type="SUPFAM" id="SSF46894">
    <property type="entry name" value="C-terminal effector domain of the bipartite response regulators"/>
    <property type="match status" value="1"/>
</dbReference>
<dbReference type="SUPFAM" id="SSF52172">
    <property type="entry name" value="CheY-like"/>
    <property type="match status" value="1"/>
</dbReference>
<dbReference type="PROSITE" id="PS51755">
    <property type="entry name" value="OMPR_PHOB"/>
    <property type="match status" value="1"/>
</dbReference>
<dbReference type="PROSITE" id="PS50110">
    <property type="entry name" value="RESPONSE_REGULATORY"/>
    <property type="match status" value="1"/>
</dbReference>
<name>WALR_STAA9</name>
<gene>
    <name type="primary">walR</name>
    <name type="ordered locus">SaurJH9_0018</name>
</gene>
<feature type="chain" id="PRO_0000353035" description="Transcriptional regulatory protein WalR">
    <location>
        <begin position="1"/>
        <end position="233"/>
    </location>
</feature>
<feature type="domain" description="Response regulatory" evidence="4">
    <location>
        <begin position="4"/>
        <end position="117"/>
    </location>
</feature>
<feature type="DNA-binding region" description="OmpR/PhoB-type" evidence="5">
    <location>
        <begin position="132"/>
        <end position="231"/>
    </location>
</feature>
<feature type="modified residue" description="4-aspartylphosphate" evidence="4">
    <location>
        <position position="53"/>
    </location>
</feature>
<feature type="modified residue" description="Phosphothreonine" evidence="2">
    <location>
        <position position="101"/>
    </location>
</feature>
<proteinExistence type="inferred from homology"/>
<accession>A5INQ9</accession>
<keyword id="KW-0010">Activator</keyword>
<keyword id="KW-0963">Cytoplasm</keyword>
<keyword id="KW-0238">DNA-binding</keyword>
<keyword id="KW-0597">Phosphoprotein</keyword>
<keyword id="KW-0804">Transcription</keyword>
<keyword id="KW-0805">Transcription regulation</keyword>
<keyword id="KW-0902">Two-component regulatory system</keyword>
<comment type="function">
    <text evidence="1 3">Member of the two-component regulatory system WalK/WalR that regulates genes involved in cell wall metabolism, virulence regulation, biofilm production, oxidative stress resistance and antibiotic resistance via direct or indirect regulation of autolysins (By similarity). Functions as a transcription regulator by direct binding to promoter regions (By similarity).</text>
</comment>
<comment type="subcellular location">
    <subcellularLocation>
        <location evidence="6">Cytoplasm</location>
    </subcellularLocation>
</comment>
<comment type="PTM">
    <text evidence="2 3">Phosphorylated by WalK on Asp-53 (By similarity). Phosphorylated by PknB on Thr-101 (By similarity).</text>
</comment>
<reference key="1">
    <citation type="submission" date="2007-05" db="EMBL/GenBank/DDBJ databases">
        <title>Complete sequence of chromosome of Staphylococcus aureus subsp. aureus JH9.</title>
        <authorList>
            <consortium name="US DOE Joint Genome Institute"/>
            <person name="Copeland A."/>
            <person name="Lucas S."/>
            <person name="Lapidus A."/>
            <person name="Barry K."/>
            <person name="Detter J.C."/>
            <person name="Glavina del Rio T."/>
            <person name="Hammon N."/>
            <person name="Israni S."/>
            <person name="Pitluck S."/>
            <person name="Chain P."/>
            <person name="Malfatti S."/>
            <person name="Shin M."/>
            <person name="Vergez L."/>
            <person name="Schmutz J."/>
            <person name="Larimer F."/>
            <person name="Land M."/>
            <person name="Hauser L."/>
            <person name="Kyrpides N."/>
            <person name="Kim E."/>
            <person name="Tomasz A."/>
            <person name="Richardson P."/>
        </authorList>
    </citation>
    <scope>NUCLEOTIDE SEQUENCE [LARGE SCALE GENOMIC DNA]</scope>
    <source>
        <strain>JH9</strain>
    </source>
</reference>
<protein>
    <recommendedName>
        <fullName evidence="6">Transcriptional regulatory protein WalR</fullName>
    </recommendedName>
</protein>
<sequence length="233" mass="27192">MARKVVVVDDEKPIADILEFNLKKEGYDVYCAYDGNDAVDLIYEEEPDIVLLDIMLPGRDGMEVCREVRKKYEMPIIMLTAKDSEIDKVLGLELGADDYVTKPFSTRELIARVKANLRRHYSQPAQDTGNVTNEITIKDIVIYPDAYSIKKRGEDIELTHREFELFHYLSKHMGQVMTREHLLQTVWGYDYFGDVRTVDVTIRRLREKIEDDPSHPEYIVTRRGVGYFLQQHE</sequence>
<evidence type="ECO:0000250" key="1">
    <source>
        <dbReference type="UniProtKB" id="Q2G2U6"/>
    </source>
</evidence>
<evidence type="ECO:0000250" key="2">
    <source>
        <dbReference type="UniProtKB" id="Q7A8E1"/>
    </source>
</evidence>
<evidence type="ECO:0000250" key="3">
    <source>
        <dbReference type="UniProtKB" id="Q9RDT5"/>
    </source>
</evidence>
<evidence type="ECO:0000255" key="4">
    <source>
        <dbReference type="PROSITE-ProRule" id="PRU00169"/>
    </source>
</evidence>
<evidence type="ECO:0000255" key="5">
    <source>
        <dbReference type="PROSITE-ProRule" id="PRU01091"/>
    </source>
</evidence>
<evidence type="ECO:0000305" key="6"/>